<dbReference type="EC" id="3.1.-.-" evidence="1"/>
<dbReference type="EMBL" id="AE016795">
    <property type="protein sequence ID" value="AAO09954.1"/>
    <property type="molecule type" value="Genomic_DNA"/>
</dbReference>
<dbReference type="SMR" id="Q8DCB1"/>
<dbReference type="KEGG" id="vvu:VV1_1528"/>
<dbReference type="HOGENOM" id="CLU_098240_3_0_6"/>
<dbReference type="Proteomes" id="UP000002275">
    <property type="component" value="Chromosome 1"/>
</dbReference>
<dbReference type="GO" id="GO:0005829">
    <property type="term" value="C:cytosol"/>
    <property type="evidence" value="ECO:0007669"/>
    <property type="project" value="TreeGrafter"/>
</dbReference>
<dbReference type="GO" id="GO:0004518">
    <property type="term" value="F:nuclease activity"/>
    <property type="evidence" value="ECO:0007669"/>
    <property type="project" value="UniProtKB-KW"/>
</dbReference>
<dbReference type="GO" id="GO:0000967">
    <property type="term" value="P:rRNA 5'-end processing"/>
    <property type="evidence" value="ECO:0007669"/>
    <property type="project" value="UniProtKB-UniRule"/>
</dbReference>
<dbReference type="CDD" id="cd16964">
    <property type="entry name" value="YqgF"/>
    <property type="match status" value="1"/>
</dbReference>
<dbReference type="FunFam" id="3.30.420.140:FF:000002">
    <property type="entry name" value="Putative pre-16S rRNA nuclease"/>
    <property type="match status" value="1"/>
</dbReference>
<dbReference type="Gene3D" id="3.30.420.140">
    <property type="entry name" value="YqgF/RNase H-like domain"/>
    <property type="match status" value="1"/>
</dbReference>
<dbReference type="HAMAP" id="MF_00651">
    <property type="entry name" value="Nuclease_YqgF"/>
    <property type="match status" value="1"/>
</dbReference>
<dbReference type="InterPro" id="IPR012337">
    <property type="entry name" value="RNaseH-like_sf"/>
</dbReference>
<dbReference type="InterPro" id="IPR005227">
    <property type="entry name" value="YqgF"/>
</dbReference>
<dbReference type="InterPro" id="IPR006641">
    <property type="entry name" value="YqgF/RNaseH-like_dom"/>
</dbReference>
<dbReference type="InterPro" id="IPR037027">
    <property type="entry name" value="YqgF/RNaseH-like_dom_sf"/>
</dbReference>
<dbReference type="NCBIfam" id="TIGR00250">
    <property type="entry name" value="RNAse_H_YqgF"/>
    <property type="match status" value="1"/>
</dbReference>
<dbReference type="PANTHER" id="PTHR33317">
    <property type="entry name" value="POLYNUCLEOTIDYL TRANSFERASE, RIBONUCLEASE H-LIKE SUPERFAMILY PROTEIN"/>
    <property type="match status" value="1"/>
</dbReference>
<dbReference type="PANTHER" id="PTHR33317:SF4">
    <property type="entry name" value="POLYNUCLEOTIDYL TRANSFERASE, RIBONUCLEASE H-LIKE SUPERFAMILY PROTEIN"/>
    <property type="match status" value="1"/>
</dbReference>
<dbReference type="Pfam" id="PF03652">
    <property type="entry name" value="RuvX"/>
    <property type="match status" value="1"/>
</dbReference>
<dbReference type="SMART" id="SM00732">
    <property type="entry name" value="YqgFc"/>
    <property type="match status" value="1"/>
</dbReference>
<dbReference type="SUPFAM" id="SSF53098">
    <property type="entry name" value="Ribonuclease H-like"/>
    <property type="match status" value="1"/>
</dbReference>
<evidence type="ECO:0000255" key="1">
    <source>
        <dbReference type="HAMAP-Rule" id="MF_00651"/>
    </source>
</evidence>
<sequence length="140" mass="15467">MSRTIMAFDFGTKSIGSAIGQEITGTASPLKAFKANDGIPNWDEIEKQIKEWQPNLLVVGLPTDLHGKALETITPRAKKFAQRLQGRFGLPVELHDERLSTTEARSELFSMGGYKALSKGNVDCQSAVIILESWFEAQWG</sequence>
<proteinExistence type="inferred from homology"/>
<feature type="chain" id="PRO_0000172172" description="Putative pre-16S rRNA nuclease">
    <location>
        <begin position="1"/>
        <end position="140"/>
    </location>
</feature>
<comment type="function">
    <text evidence="1">Could be a nuclease involved in processing of the 5'-end of pre-16S rRNA.</text>
</comment>
<comment type="subcellular location">
    <subcellularLocation>
        <location evidence="1">Cytoplasm</location>
    </subcellularLocation>
</comment>
<comment type="similarity">
    <text evidence="1">Belongs to the YqgF nuclease family.</text>
</comment>
<accession>Q8DCB1</accession>
<organism>
    <name type="scientific">Vibrio vulnificus (strain CMCP6)</name>
    <dbReference type="NCBI Taxonomy" id="216895"/>
    <lineage>
        <taxon>Bacteria</taxon>
        <taxon>Pseudomonadati</taxon>
        <taxon>Pseudomonadota</taxon>
        <taxon>Gammaproteobacteria</taxon>
        <taxon>Vibrionales</taxon>
        <taxon>Vibrionaceae</taxon>
        <taxon>Vibrio</taxon>
    </lineage>
</organism>
<name>YQGF_VIBVU</name>
<protein>
    <recommendedName>
        <fullName evidence="1">Putative pre-16S rRNA nuclease</fullName>
        <ecNumber evidence="1">3.1.-.-</ecNumber>
    </recommendedName>
</protein>
<reference key="1">
    <citation type="submission" date="2002-12" db="EMBL/GenBank/DDBJ databases">
        <title>Complete genome sequence of Vibrio vulnificus CMCP6.</title>
        <authorList>
            <person name="Rhee J.H."/>
            <person name="Kim S.Y."/>
            <person name="Chung S.S."/>
            <person name="Kim J.J."/>
            <person name="Moon Y.H."/>
            <person name="Jeong H."/>
            <person name="Choy H.E."/>
        </authorList>
    </citation>
    <scope>NUCLEOTIDE SEQUENCE [LARGE SCALE GENOMIC DNA]</scope>
    <source>
        <strain>CMCP6</strain>
    </source>
</reference>
<keyword id="KW-0963">Cytoplasm</keyword>
<keyword id="KW-0378">Hydrolase</keyword>
<keyword id="KW-0540">Nuclease</keyword>
<keyword id="KW-0690">Ribosome biogenesis</keyword>
<gene>
    <name type="ordered locus">VV1_1528</name>
</gene>